<dbReference type="EMBL" id="M12896">
    <property type="protein sequence ID" value="AAA28734.1"/>
    <property type="molecule type" value="Genomic_DNA"/>
</dbReference>
<dbReference type="EMBL" id="AE014297">
    <property type="protein sequence ID" value="AAF55601.1"/>
    <property type="molecule type" value="Genomic_DNA"/>
</dbReference>
<dbReference type="PIR" id="A24058">
    <property type="entry name" value="OOFF2"/>
</dbReference>
<dbReference type="RefSeq" id="NP_524398.1">
    <property type="nucleotide sequence ID" value="NM_079674.3"/>
</dbReference>
<dbReference type="SMR" id="P08099"/>
<dbReference type="BioGRID" id="67266">
    <property type="interactions" value="4"/>
</dbReference>
<dbReference type="DIP" id="DIP-22447N"/>
<dbReference type="FunCoup" id="P08099">
    <property type="interactions" value="41"/>
</dbReference>
<dbReference type="IntAct" id="P08099">
    <property type="interactions" value="1"/>
</dbReference>
<dbReference type="STRING" id="7227.FBpp0083111"/>
<dbReference type="GlyCosmos" id="P08099">
    <property type="glycosylation" value="1 site, No reported glycans"/>
</dbReference>
<dbReference type="GlyGen" id="P08099">
    <property type="glycosylation" value="1 site"/>
</dbReference>
<dbReference type="PaxDb" id="7227-FBpp0083111"/>
<dbReference type="DNASU" id="42261"/>
<dbReference type="EnsemblMetazoa" id="FBtr0083697">
    <property type="protein sequence ID" value="FBpp0083111"/>
    <property type="gene ID" value="FBgn0003248"/>
</dbReference>
<dbReference type="GeneID" id="42261"/>
<dbReference type="KEGG" id="dme:Dmel_CG16740"/>
<dbReference type="AGR" id="FB:FBgn0003248"/>
<dbReference type="CTD" id="42261"/>
<dbReference type="FlyBase" id="FBgn0003248">
    <property type="gene designation" value="Rh2"/>
</dbReference>
<dbReference type="VEuPathDB" id="VectorBase:FBgn0003248"/>
<dbReference type="eggNOG" id="KOG3656">
    <property type="taxonomic scope" value="Eukaryota"/>
</dbReference>
<dbReference type="HOGENOM" id="CLU_009579_3_0_1"/>
<dbReference type="InParanoid" id="P08099"/>
<dbReference type="OMA" id="KILFIWM"/>
<dbReference type="OrthoDB" id="9996086at2759"/>
<dbReference type="PhylomeDB" id="P08099"/>
<dbReference type="SignaLink" id="P08099"/>
<dbReference type="BioGRID-ORCS" id="42261">
    <property type="hits" value="0 hits in 3 CRISPR screens"/>
</dbReference>
<dbReference type="ChiTaRS" id="Rh2">
    <property type="organism name" value="fly"/>
</dbReference>
<dbReference type="GenomeRNAi" id="42261"/>
<dbReference type="PRO" id="PR:P08099"/>
<dbReference type="Proteomes" id="UP000000803">
    <property type="component" value="Chromosome 3R"/>
</dbReference>
<dbReference type="Bgee" id="FBgn0003248">
    <property type="expression patterns" value="Expressed in ocellus retinula cell (Drosophila) in insect head and 38 other cell types or tissues"/>
</dbReference>
<dbReference type="ExpressionAtlas" id="P08099">
    <property type="expression patterns" value="baseline and differential"/>
</dbReference>
<dbReference type="GO" id="GO:0016020">
    <property type="term" value="C:membrane"/>
    <property type="evidence" value="ECO:0000250"/>
    <property type="project" value="FlyBase"/>
</dbReference>
<dbReference type="GO" id="GO:0005886">
    <property type="term" value="C:plasma membrane"/>
    <property type="evidence" value="ECO:0000318"/>
    <property type="project" value="GO_Central"/>
</dbReference>
<dbReference type="GO" id="GO:0008020">
    <property type="term" value="F:G protein-coupled photoreceptor activity"/>
    <property type="evidence" value="ECO:0000314"/>
    <property type="project" value="FlyBase"/>
</dbReference>
<dbReference type="GO" id="GO:0004930">
    <property type="term" value="F:G protein-coupled receptor activity"/>
    <property type="evidence" value="ECO:0000318"/>
    <property type="project" value="GO_Central"/>
</dbReference>
<dbReference type="GO" id="GO:0007186">
    <property type="term" value="P:G protein-coupled receptor signaling pathway"/>
    <property type="evidence" value="ECO:0000250"/>
    <property type="project" value="FlyBase"/>
</dbReference>
<dbReference type="GO" id="GO:0007602">
    <property type="term" value="P:phototransduction"/>
    <property type="evidence" value="ECO:0000316"/>
    <property type="project" value="FlyBase"/>
</dbReference>
<dbReference type="GO" id="GO:0007601">
    <property type="term" value="P:visual perception"/>
    <property type="evidence" value="ECO:0007669"/>
    <property type="project" value="UniProtKB-KW"/>
</dbReference>
<dbReference type="CDD" id="cd15079">
    <property type="entry name" value="7tmA_photoreceptors_insect"/>
    <property type="match status" value="1"/>
</dbReference>
<dbReference type="FunFam" id="1.20.1070.10:FF:000044">
    <property type="entry name" value="Opsin, ultraviolet-sensitive"/>
    <property type="match status" value="1"/>
</dbReference>
<dbReference type="Gene3D" id="1.20.1070.10">
    <property type="entry name" value="Rhodopsin 7-helix transmembrane proteins"/>
    <property type="match status" value="1"/>
</dbReference>
<dbReference type="InterPro" id="IPR050125">
    <property type="entry name" value="GPCR_opsins"/>
</dbReference>
<dbReference type="InterPro" id="IPR000276">
    <property type="entry name" value="GPCR_Rhodpsn"/>
</dbReference>
<dbReference type="InterPro" id="IPR017452">
    <property type="entry name" value="GPCR_Rhodpsn_7TM"/>
</dbReference>
<dbReference type="InterPro" id="IPR001760">
    <property type="entry name" value="Opsin"/>
</dbReference>
<dbReference type="InterPro" id="IPR001735">
    <property type="entry name" value="Opsin_RH1/RH2"/>
</dbReference>
<dbReference type="InterPro" id="IPR027430">
    <property type="entry name" value="Retinal_BS"/>
</dbReference>
<dbReference type="PANTHER" id="PTHR24240">
    <property type="entry name" value="OPSIN"/>
    <property type="match status" value="1"/>
</dbReference>
<dbReference type="Pfam" id="PF00001">
    <property type="entry name" value="7tm_1"/>
    <property type="match status" value="1"/>
</dbReference>
<dbReference type="PRINTS" id="PR00237">
    <property type="entry name" value="GPCRRHODOPSN"/>
</dbReference>
<dbReference type="PRINTS" id="PR00238">
    <property type="entry name" value="OPSIN"/>
</dbReference>
<dbReference type="PRINTS" id="PR00576">
    <property type="entry name" value="OPSINRH1RH2"/>
</dbReference>
<dbReference type="SUPFAM" id="SSF81321">
    <property type="entry name" value="Family A G protein-coupled receptor-like"/>
    <property type="match status" value="1"/>
</dbReference>
<dbReference type="PROSITE" id="PS00237">
    <property type="entry name" value="G_PROTEIN_RECEP_F1_1"/>
    <property type="match status" value="1"/>
</dbReference>
<dbReference type="PROSITE" id="PS50262">
    <property type="entry name" value="G_PROTEIN_RECEP_F1_2"/>
    <property type="match status" value="1"/>
</dbReference>
<dbReference type="PROSITE" id="PS00238">
    <property type="entry name" value="OPSIN"/>
    <property type="match status" value="1"/>
</dbReference>
<accession>P08099</accession>
<accession>Q9VE29</accession>
<sequence>MERSHLPETPFDLAHSGPRFQAQSSGNGSVLDNVLPDMAHLVNPYWSRFAPMDPMMSKILGLFTLAIMIISCCGNGVVVYIFGGTKSLRTPANLLVLNLAFSDFCMMASQSPVMIINFYYETWVLGPLWCDIYAGCGSLFGCVSIWSMCMIAFDRYNVIVKGINGTPMTIKTSIMKILFIWMMAVFWTVMPLIGWSAYVPEGNLTACSIDYMTRMWNPRSYLITYSLFVYYTPLFLICYSYWFIIAAVAAHEKAMREQAKKMNVKSLRSSEDCDKSAEGKLAKVALTTISLWFMAWTPYLVICYFGLFKIDGLTPLTTIWGATFAKTSAVYNPIVYGISHPKYRIVLKEKCPMCVFGNTDEPKPDAPASDTETTSEADSKA</sequence>
<organism>
    <name type="scientific">Drosophila melanogaster</name>
    <name type="common">Fruit fly</name>
    <dbReference type="NCBI Taxonomy" id="7227"/>
    <lineage>
        <taxon>Eukaryota</taxon>
        <taxon>Metazoa</taxon>
        <taxon>Ecdysozoa</taxon>
        <taxon>Arthropoda</taxon>
        <taxon>Hexapoda</taxon>
        <taxon>Insecta</taxon>
        <taxon>Pterygota</taxon>
        <taxon>Neoptera</taxon>
        <taxon>Endopterygota</taxon>
        <taxon>Diptera</taxon>
        <taxon>Brachycera</taxon>
        <taxon>Muscomorpha</taxon>
        <taxon>Ephydroidea</taxon>
        <taxon>Drosophilidae</taxon>
        <taxon>Drosophila</taxon>
        <taxon>Sophophora</taxon>
    </lineage>
</organism>
<comment type="function">
    <text>Visual pigments are the light-absorbing molecules that mediate vision. They consist of an apoprotein, opsin, covalently linked to cis-retinal.</text>
</comment>
<comment type="biophysicochemical properties">
    <absorption>
        <max evidence="4">420 nm</max>
    </absorption>
</comment>
<comment type="subcellular location">
    <subcellularLocation>
        <location>Membrane</location>
        <topology>Multi-pass membrane protein</topology>
    </subcellularLocation>
</comment>
<comment type="tissue specificity">
    <text>Predominant opsin expressed in the dorsal ocelli.</text>
</comment>
<comment type="PTM">
    <text>Phosphorylated on some or all of the serine and threonine residues present in the C-terminal region.</text>
</comment>
<comment type="similarity">
    <text evidence="2">Belongs to the G-protein coupled receptor 1 family. Opsin subfamily.</text>
</comment>
<keyword id="KW-0157">Chromophore</keyword>
<keyword id="KW-1015">Disulfide bond</keyword>
<keyword id="KW-0297">G-protein coupled receptor</keyword>
<keyword id="KW-0325">Glycoprotein</keyword>
<keyword id="KW-0472">Membrane</keyword>
<keyword id="KW-0597">Phosphoprotein</keyword>
<keyword id="KW-0600">Photoreceptor protein</keyword>
<keyword id="KW-0675">Receptor</keyword>
<keyword id="KW-1185">Reference proteome</keyword>
<keyword id="KW-0681">Retinal protein</keyword>
<keyword id="KW-0716">Sensory transduction</keyword>
<keyword id="KW-0807">Transducer</keyword>
<keyword id="KW-0812">Transmembrane</keyword>
<keyword id="KW-1133">Transmembrane helix</keyword>
<keyword id="KW-0844">Vision</keyword>
<gene>
    <name type="primary">Rh2</name>
    <name type="ORF">CG16740</name>
</gene>
<name>OPS2_DROME</name>
<protein>
    <recommendedName>
        <fullName>Opsin Rh2</fullName>
    </recommendedName>
    <alternativeName>
        <fullName>Ocellar opsin</fullName>
    </alternativeName>
</protein>
<reference key="1">
    <citation type="journal article" date="1986" name="Cell">
        <title>An opsin gene expressed in only one photoreceptor cell type of the Drosophila eye.</title>
        <authorList>
            <person name="Cowman A.F."/>
            <person name="Zuker C.S."/>
            <person name="Rubin G.M."/>
        </authorList>
    </citation>
    <scope>NUCLEOTIDE SEQUENCE [GENOMIC DNA]</scope>
</reference>
<reference key="2">
    <citation type="journal article" date="2000" name="Science">
        <title>The genome sequence of Drosophila melanogaster.</title>
        <authorList>
            <person name="Adams M.D."/>
            <person name="Celniker S.E."/>
            <person name="Holt R.A."/>
            <person name="Evans C.A."/>
            <person name="Gocayne J.D."/>
            <person name="Amanatides P.G."/>
            <person name="Scherer S.E."/>
            <person name="Li P.W."/>
            <person name="Hoskins R.A."/>
            <person name="Galle R.F."/>
            <person name="George R.A."/>
            <person name="Lewis S.E."/>
            <person name="Richards S."/>
            <person name="Ashburner M."/>
            <person name="Henderson S.N."/>
            <person name="Sutton G.G."/>
            <person name="Wortman J.R."/>
            <person name="Yandell M.D."/>
            <person name="Zhang Q."/>
            <person name="Chen L.X."/>
            <person name="Brandon R.C."/>
            <person name="Rogers Y.-H.C."/>
            <person name="Blazej R.G."/>
            <person name="Champe M."/>
            <person name="Pfeiffer B.D."/>
            <person name="Wan K.H."/>
            <person name="Doyle C."/>
            <person name="Baxter E.G."/>
            <person name="Helt G."/>
            <person name="Nelson C.R."/>
            <person name="Miklos G.L.G."/>
            <person name="Abril J.F."/>
            <person name="Agbayani A."/>
            <person name="An H.-J."/>
            <person name="Andrews-Pfannkoch C."/>
            <person name="Baldwin D."/>
            <person name="Ballew R.M."/>
            <person name="Basu A."/>
            <person name="Baxendale J."/>
            <person name="Bayraktaroglu L."/>
            <person name="Beasley E.M."/>
            <person name="Beeson K.Y."/>
            <person name="Benos P.V."/>
            <person name="Berman B.P."/>
            <person name="Bhandari D."/>
            <person name="Bolshakov S."/>
            <person name="Borkova D."/>
            <person name="Botchan M.R."/>
            <person name="Bouck J."/>
            <person name="Brokstein P."/>
            <person name="Brottier P."/>
            <person name="Burtis K.C."/>
            <person name="Busam D.A."/>
            <person name="Butler H."/>
            <person name="Cadieu E."/>
            <person name="Center A."/>
            <person name="Chandra I."/>
            <person name="Cherry J.M."/>
            <person name="Cawley S."/>
            <person name="Dahlke C."/>
            <person name="Davenport L.B."/>
            <person name="Davies P."/>
            <person name="de Pablos B."/>
            <person name="Delcher A."/>
            <person name="Deng Z."/>
            <person name="Mays A.D."/>
            <person name="Dew I."/>
            <person name="Dietz S.M."/>
            <person name="Dodson K."/>
            <person name="Doup L.E."/>
            <person name="Downes M."/>
            <person name="Dugan-Rocha S."/>
            <person name="Dunkov B.C."/>
            <person name="Dunn P."/>
            <person name="Durbin K.J."/>
            <person name="Evangelista C.C."/>
            <person name="Ferraz C."/>
            <person name="Ferriera S."/>
            <person name="Fleischmann W."/>
            <person name="Fosler C."/>
            <person name="Gabrielian A.E."/>
            <person name="Garg N.S."/>
            <person name="Gelbart W.M."/>
            <person name="Glasser K."/>
            <person name="Glodek A."/>
            <person name="Gong F."/>
            <person name="Gorrell J.H."/>
            <person name="Gu Z."/>
            <person name="Guan P."/>
            <person name="Harris M."/>
            <person name="Harris N.L."/>
            <person name="Harvey D.A."/>
            <person name="Heiman T.J."/>
            <person name="Hernandez J.R."/>
            <person name="Houck J."/>
            <person name="Hostin D."/>
            <person name="Houston K.A."/>
            <person name="Howland T.J."/>
            <person name="Wei M.-H."/>
            <person name="Ibegwam C."/>
            <person name="Jalali M."/>
            <person name="Kalush F."/>
            <person name="Karpen G.H."/>
            <person name="Ke Z."/>
            <person name="Kennison J.A."/>
            <person name="Ketchum K.A."/>
            <person name="Kimmel B.E."/>
            <person name="Kodira C.D."/>
            <person name="Kraft C.L."/>
            <person name="Kravitz S."/>
            <person name="Kulp D."/>
            <person name="Lai Z."/>
            <person name="Lasko P."/>
            <person name="Lei Y."/>
            <person name="Levitsky A.A."/>
            <person name="Li J.H."/>
            <person name="Li Z."/>
            <person name="Liang Y."/>
            <person name="Lin X."/>
            <person name="Liu X."/>
            <person name="Mattei B."/>
            <person name="McIntosh T.C."/>
            <person name="McLeod M.P."/>
            <person name="McPherson D."/>
            <person name="Merkulov G."/>
            <person name="Milshina N.V."/>
            <person name="Mobarry C."/>
            <person name="Morris J."/>
            <person name="Moshrefi A."/>
            <person name="Mount S.M."/>
            <person name="Moy M."/>
            <person name="Murphy B."/>
            <person name="Murphy L."/>
            <person name="Muzny D.M."/>
            <person name="Nelson D.L."/>
            <person name="Nelson D.R."/>
            <person name="Nelson K.A."/>
            <person name="Nixon K."/>
            <person name="Nusskern D.R."/>
            <person name="Pacleb J.M."/>
            <person name="Palazzolo M."/>
            <person name="Pittman G.S."/>
            <person name="Pan S."/>
            <person name="Pollard J."/>
            <person name="Puri V."/>
            <person name="Reese M.G."/>
            <person name="Reinert K."/>
            <person name="Remington K."/>
            <person name="Saunders R.D.C."/>
            <person name="Scheeler F."/>
            <person name="Shen H."/>
            <person name="Shue B.C."/>
            <person name="Siden-Kiamos I."/>
            <person name="Simpson M."/>
            <person name="Skupski M.P."/>
            <person name="Smith T.J."/>
            <person name="Spier E."/>
            <person name="Spradling A.C."/>
            <person name="Stapleton M."/>
            <person name="Strong R."/>
            <person name="Sun E."/>
            <person name="Svirskas R."/>
            <person name="Tector C."/>
            <person name="Turner R."/>
            <person name="Venter E."/>
            <person name="Wang A.H."/>
            <person name="Wang X."/>
            <person name="Wang Z.-Y."/>
            <person name="Wassarman D.A."/>
            <person name="Weinstock G.M."/>
            <person name="Weissenbach J."/>
            <person name="Williams S.M."/>
            <person name="Woodage T."/>
            <person name="Worley K.C."/>
            <person name="Wu D."/>
            <person name="Yang S."/>
            <person name="Yao Q.A."/>
            <person name="Ye J."/>
            <person name="Yeh R.-F."/>
            <person name="Zaveri J.S."/>
            <person name="Zhan M."/>
            <person name="Zhang G."/>
            <person name="Zhao Q."/>
            <person name="Zheng L."/>
            <person name="Zheng X.H."/>
            <person name="Zhong F.N."/>
            <person name="Zhong W."/>
            <person name="Zhou X."/>
            <person name="Zhu S.C."/>
            <person name="Zhu X."/>
            <person name="Smith H.O."/>
            <person name="Gibbs R.A."/>
            <person name="Myers E.W."/>
            <person name="Rubin G.M."/>
            <person name="Venter J.C."/>
        </authorList>
    </citation>
    <scope>NUCLEOTIDE SEQUENCE [LARGE SCALE GENOMIC DNA]</scope>
    <source>
        <strain>Berkeley</strain>
    </source>
</reference>
<reference key="3">
    <citation type="journal article" date="2002" name="Genome Biol.">
        <title>Annotation of the Drosophila melanogaster euchromatic genome: a systematic review.</title>
        <authorList>
            <person name="Misra S."/>
            <person name="Crosby M.A."/>
            <person name="Mungall C.J."/>
            <person name="Matthews B.B."/>
            <person name="Campbell K.S."/>
            <person name="Hradecky P."/>
            <person name="Huang Y."/>
            <person name="Kaminker J.S."/>
            <person name="Millburn G.H."/>
            <person name="Prochnik S.E."/>
            <person name="Smith C.D."/>
            <person name="Tupy J.L."/>
            <person name="Whitfield E.J."/>
            <person name="Bayraktaroglu L."/>
            <person name="Berman B.P."/>
            <person name="Bettencourt B.R."/>
            <person name="Celniker S.E."/>
            <person name="de Grey A.D.N.J."/>
            <person name="Drysdale R.A."/>
            <person name="Harris N.L."/>
            <person name="Richter J."/>
            <person name="Russo S."/>
            <person name="Schroeder A.J."/>
            <person name="Shu S.Q."/>
            <person name="Stapleton M."/>
            <person name="Yamada C."/>
            <person name="Ashburner M."/>
            <person name="Gelbart W.M."/>
            <person name="Rubin G.M."/>
            <person name="Lewis S.E."/>
        </authorList>
    </citation>
    <scope>GENOME REANNOTATION</scope>
    <source>
        <strain>Berkeley</strain>
    </source>
</reference>
<reference key="4">
    <citation type="journal article" date="1988" name="Nature">
        <title>Targeted misexpression of a Drosophila opsin gene leads to altered visual function.</title>
        <authorList>
            <person name="Feiler R."/>
            <person name="Harris W.A."/>
            <person name="Kirschfeld K."/>
            <person name="Wehrhahn C."/>
            <person name="Zuker C.S."/>
        </authorList>
    </citation>
    <scope>LOCALIZATION OF OPSIN RH2</scope>
    <scope>BIOPHYSICOCHEMICAL PROPERTIES</scope>
</reference>
<reference key="5">
    <citation type="journal article" date="1988" name="Nature">
        <title>Transcript localization of four opsin genes in the three visual organs of Drosophila; RH2 is ocellus specific.</title>
        <authorList>
            <person name="Pollock J.A."/>
            <person name="Benzer S."/>
        </authorList>
    </citation>
    <scope>LOCALIZATION OF OPSIN RH2</scope>
</reference>
<evidence type="ECO:0000255" key="1"/>
<evidence type="ECO:0000255" key="2">
    <source>
        <dbReference type="PROSITE-ProRule" id="PRU00521"/>
    </source>
</evidence>
<evidence type="ECO:0000256" key="3">
    <source>
        <dbReference type="SAM" id="MobiDB-lite"/>
    </source>
</evidence>
<evidence type="ECO:0000269" key="4">
    <source>
    </source>
</evidence>
<evidence type="ECO:0000305" key="5"/>
<proteinExistence type="evidence at protein level"/>
<feature type="chain" id="PRO_0000197625" description="Opsin Rh2">
    <location>
        <begin position="1"/>
        <end position="381"/>
    </location>
</feature>
<feature type="topological domain" description="Extracellular">
    <location>
        <begin position="1"/>
        <end position="56"/>
    </location>
</feature>
<feature type="transmembrane region" description="Helical; Name=1" evidence="1">
    <location>
        <begin position="57"/>
        <end position="81"/>
    </location>
</feature>
<feature type="topological domain" description="Cytoplasmic">
    <location>
        <begin position="82"/>
        <end position="93"/>
    </location>
</feature>
<feature type="transmembrane region" description="Helical; Name=2" evidence="1">
    <location>
        <begin position="94"/>
        <end position="119"/>
    </location>
</feature>
<feature type="topological domain" description="Extracellular">
    <location>
        <begin position="120"/>
        <end position="133"/>
    </location>
</feature>
<feature type="transmembrane region" description="Helical; Name=3" evidence="1">
    <location>
        <begin position="134"/>
        <end position="153"/>
    </location>
</feature>
<feature type="topological domain" description="Cytoplasmic">
    <location>
        <begin position="154"/>
        <end position="172"/>
    </location>
</feature>
<feature type="transmembrane region" description="Helical; Name=4" evidence="1">
    <location>
        <begin position="173"/>
        <end position="196"/>
    </location>
</feature>
<feature type="topological domain" description="Extracellular">
    <location>
        <begin position="197"/>
        <end position="220"/>
    </location>
</feature>
<feature type="transmembrane region" description="Helical; Name=5" evidence="1">
    <location>
        <begin position="221"/>
        <end position="248"/>
    </location>
</feature>
<feature type="topological domain" description="Cytoplasmic">
    <location>
        <begin position="249"/>
        <end position="283"/>
    </location>
</feature>
<feature type="transmembrane region" description="Helical; Name=6" evidence="1">
    <location>
        <begin position="284"/>
        <end position="307"/>
    </location>
</feature>
<feature type="topological domain" description="Extracellular">
    <location>
        <begin position="308"/>
        <end position="314"/>
    </location>
</feature>
<feature type="transmembrane region" description="Helical; Name=7" evidence="1">
    <location>
        <begin position="315"/>
        <end position="339"/>
    </location>
</feature>
<feature type="topological domain" description="Cytoplasmic">
    <location>
        <begin position="340"/>
        <end position="381"/>
    </location>
</feature>
<feature type="region of interest" description="Disordered" evidence="3">
    <location>
        <begin position="359"/>
        <end position="381"/>
    </location>
</feature>
<feature type="compositionally biased region" description="Polar residues" evidence="3">
    <location>
        <begin position="370"/>
        <end position="381"/>
    </location>
</feature>
<feature type="modified residue" description="N6-(retinylidene)lysine">
    <location>
        <position position="326"/>
    </location>
</feature>
<feature type="glycosylation site" description="N-linked (GlcNAc...) asparagine" evidence="5">
    <location>
        <position position="27"/>
    </location>
</feature>
<feature type="disulfide bond" evidence="2">
    <location>
        <begin position="130"/>
        <end position="207"/>
    </location>
</feature>